<evidence type="ECO:0000255" key="1">
    <source>
        <dbReference type="HAMAP-Rule" id="MF_00060"/>
    </source>
</evidence>
<gene>
    <name evidence="1" type="primary">surE</name>
    <name type="ordered locus">Neut_2324</name>
</gene>
<dbReference type="EC" id="3.1.3.5" evidence="1"/>
<dbReference type="EMBL" id="CP000450">
    <property type="protein sequence ID" value="ABI60541.1"/>
    <property type="molecule type" value="Genomic_DNA"/>
</dbReference>
<dbReference type="RefSeq" id="WP_011635314.1">
    <property type="nucleotide sequence ID" value="NC_008344.1"/>
</dbReference>
<dbReference type="SMR" id="Q0ADP1"/>
<dbReference type="STRING" id="335283.Neut_2324"/>
<dbReference type="KEGG" id="net:Neut_2324"/>
<dbReference type="eggNOG" id="COG0496">
    <property type="taxonomic scope" value="Bacteria"/>
</dbReference>
<dbReference type="HOGENOM" id="CLU_045192_1_2_4"/>
<dbReference type="OrthoDB" id="9780815at2"/>
<dbReference type="Proteomes" id="UP000001966">
    <property type="component" value="Chromosome"/>
</dbReference>
<dbReference type="GO" id="GO:0005737">
    <property type="term" value="C:cytoplasm"/>
    <property type="evidence" value="ECO:0007669"/>
    <property type="project" value="UniProtKB-SubCell"/>
</dbReference>
<dbReference type="GO" id="GO:0008254">
    <property type="term" value="F:3'-nucleotidase activity"/>
    <property type="evidence" value="ECO:0007669"/>
    <property type="project" value="TreeGrafter"/>
</dbReference>
<dbReference type="GO" id="GO:0008253">
    <property type="term" value="F:5'-nucleotidase activity"/>
    <property type="evidence" value="ECO:0007669"/>
    <property type="project" value="UniProtKB-UniRule"/>
</dbReference>
<dbReference type="GO" id="GO:0004309">
    <property type="term" value="F:exopolyphosphatase activity"/>
    <property type="evidence" value="ECO:0007669"/>
    <property type="project" value="TreeGrafter"/>
</dbReference>
<dbReference type="GO" id="GO:0046872">
    <property type="term" value="F:metal ion binding"/>
    <property type="evidence" value="ECO:0007669"/>
    <property type="project" value="UniProtKB-UniRule"/>
</dbReference>
<dbReference type="GO" id="GO:0000166">
    <property type="term" value="F:nucleotide binding"/>
    <property type="evidence" value="ECO:0007669"/>
    <property type="project" value="UniProtKB-KW"/>
</dbReference>
<dbReference type="FunFam" id="3.40.1210.10:FF:000001">
    <property type="entry name" value="5'/3'-nucleotidase SurE"/>
    <property type="match status" value="1"/>
</dbReference>
<dbReference type="Gene3D" id="3.40.1210.10">
    <property type="entry name" value="Survival protein SurE-like phosphatase/nucleotidase"/>
    <property type="match status" value="1"/>
</dbReference>
<dbReference type="HAMAP" id="MF_00060">
    <property type="entry name" value="SurE"/>
    <property type="match status" value="1"/>
</dbReference>
<dbReference type="InterPro" id="IPR030048">
    <property type="entry name" value="SurE"/>
</dbReference>
<dbReference type="InterPro" id="IPR002828">
    <property type="entry name" value="SurE-like_Pase/nucleotidase"/>
</dbReference>
<dbReference type="InterPro" id="IPR036523">
    <property type="entry name" value="SurE-like_sf"/>
</dbReference>
<dbReference type="NCBIfam" id="NF001489">
    <property type="entry name" value="PRK00346.1-3"/>
    <property type="match status" value="1"/>
</dbReference>
<dbReference type="NCBIfam" id="NF001490">
    <property type="entry name" value="PRK00346.1-4"/>
    <property type="match status" value="1"/>
</dbReference>
<dbReference type="NCBIfam" id="TIGR00087">
    <property type="entry name" value="surE"/>
    <property type="match status" value="1"/>
</dbReference>
<dbReference type="PANTHER" id="PTHR30457">
    <property type="entry name" value="5'-NUCLEOTIDASE SURE"/>
    <property type="match status" value="1"/>
</dbReference>
<dbReference type="PANTHER" id="PTHR30457:SF12">
    <property type="entry name" value="5'_3'-NUCLEOTIDASE SURE"/>
    <property type="match status" value="1"/>
</dbReference>
<dbReference type="Pfam" id="PF01975">
    <property type="entry name" value="SurE"/>
    <property type="match status" value="1"/>
</dbReference>
<dbReference type="SUPFAM" id="SSF64167">
    <property type="entry name" value="SurE-like"/>
    <property type="match status" value="1"/>
</dbReference>
<name>SURE_NITEC</name>
<protein>
    <recommendedName>
        <fullName evidence="1">5'-nucleotidase SurE</fullName>
        <ecNumber evidence="1">3.1.3.5</ecNumber>
    </recommendedName>
    <alternativeName>
        <fullName evidence="1">Nucleoside 5'-monophosphate phosphohydrolase</fullName>
    </alternativeName>
</protein>
<reference key="1">
    <citation type="journal article" date="2007" name="Environ. Microbiol.">
        <title>Whole-genome analysis of the ammonia-oxidizing bacterium, Nitrosomonas eutropha C91: implications for niche adaptation.</title>
        <authorList>
            <person name="Stein L.Y."/>
            <person name="Arp D.J."/>
            <person name="Berube P.M."/>
            <person name="Chain P.S."/>
            <person name="Hauser L."/>
            <person name="Jetten M.S."/>
            <person name="Klotz M.G."/>
            <person name="Larimer F.W."/>
            <person name="Norton J.M."/>
            <person name="Op den Camp H.J.M."/>
            <person name="Shin M."/>
            <person name="Wei X."/>
        </authorList>
    </citation>
    <scope>NUCLEOTIDE SEQUENCE [LARGE SCALE GENOMIC DNA]</scope>
    <source>
        <strain>DSM 101675 / C91 / Nm57</strain>
    </source>
</reference>
<organism>
    <name type="scientific">Nitrosomonas eutropha (strain DSM 101675 / C91 / Nm57)</name>
    <dbReference type="NCBI Taxonomy" id="335283"/>
    <lineage>
        <taxon>Bacteria</taxon>
        <taxon>Pseudomonadati</taxon>
        <taxon>Pseudomonadota</taxon>
        <taxon>Betaproteobacteria</taxon>
        <taxon>Nitrosomonadales</taxon>
        <taxon>Nitrosomonadaceae</taxon>
        <taxon>Nitrosomonas</taxon>
    </lineage>
</organism>
<sequence length="247" mass="26872">MRILLSNDDGYFAPGIANLAKILSDIADVTVVAPERDRSGASNSLTLDRPLSLHKSHNGFYYVNGTPTDCVHLAVTGMLDELPDMVISGINDGANMGDDTVYSGTVAAATEGFLLGLPSIAVSLVSMSRGNFPTAAKIVLDLVKRFIDNKFHVPILLNVNVPDLPYEELQGIEVTRLGRRHKAEPVIKYQTPRGETVYWVGAAGAAQDASEGTDFHALQNNRVSITPLQIDLTRYDQIGYVKNWLVF</sequence>
<keyword id="KW-0963">Cytoplasm</keyword>
<keyword id="KW-0378">Hydrolase</keyword>
<keyword id="KW-0479">Metal-binding</keyword>
<keyword id="KW-0547">Nucleotide-binding</keyword>
<feature type="chain" id="PRO_1000007753" description="5'-nucleotidase SurE">
    <location>
        <begin position="1"/>
        <end position="247"/>
    </location>
</feature>
<feature type="binding site" evidence="1">
    <location>
        <position position="8"/>
    </location>
    <ligand>
        <name>a divalent metal cation</name>
        <dbReference type="ChEBI" id="CHEBI:60240"/>
    </ligand>
</feature>
<feature type="binding site" evidence="1">
    <location>
        <position position="9"/>
    </location>
    <ligand>
        <name>a divalent metal cation</name>
        <dbReference type="ChEBI" id="CHEBI:60240"/>
    </ligand>
</feature>
<feature type="binding site" evidence="1">
    <location>
        <position position="39"/>
    </location>
    <ligand>
        <name>a divalent metal cation</name>
        <dbReference type="ChEBI" id="CHEBI:60240"/>
    </ligand>
</feature>
<feature type="binding site" evidence="1">
    <location>
        <position position="91"/>
    </location>
    <ligand>
        <name>a divalent metal cation</name>
        <dbReference type="ChEBI" id="CHEBI:60240"/>
    </ligand>
</feature>
<accession>Q0ADP1</accession>
<comment type="function">
    <text evidence="1">Nucleotidase that shows phosphatase activity on nucleoside 5'-monophosphates.</text>
</comment>
<comment type="catalytic activity">
    <reaction evidence="1">
        <text>a ribonucleoside 5'-phosphate + H2O = a ribonucleoside + phosphate</text>
        <dbReference type="Rhea" id="RHEA:12484"/>
        <dbReference type="ChEBI" id="CHEBI:15377"/>
        <dbReference type="ChEBI" id="CHEBI:18254"/>
        <dbReference type="ChEBI" id="CHEBI:43474"/>
        <dbReference type="ChEBI" id="CHEBI:58043"/>
        <dbReference type="EC" id="3.1.3.5"/>
    </reaction>
</comment>
<comment type="cofactor">
    <cofactor evidence="1">
        <name>a divalent metal cation</name>
        <dbReference type="ChEBI" id="CHEBI:60240"/>
    </cofactor>
    <text evidence="1">Binds 1 divalent metal cation per subunit.</text>
</comment>
<comment type="subcellular location">
    <subcellularLocation>
        <location evidence="1">Cytoplasm</location>
    </subcellularLocation>
</comment>
<comment type="similarity">
    <text evidence="1">Belongs to the SurE nucleotidase family.</text>
</comment>
<proteinExistence type="inferred from homology"/>